<accession>B4XC07</accession>
<comment type="function">
    <text evidence="3 6">Hydrolyzes 1,4-beta linked polysaccharide backbones of mannans. Has high activity toward locust bean gum (PubMed:18579426, PubMed:25082572). Also active toward konjac and beta-1,4-mannan. Hydrolyzes mannotetraose (M4) and mannopentaose (M5) to mannobiose (M2) and mannotriose (M3) with a little production of mannose (M1). Hydrolyzes beta-1,4-mannan to M2, M3 and M4. Hardly hydrolyzes M2 and M3. Does not hydrolyze p-nitrophenyl-beta-D-mannopyranoside, gua-gum, carboxymethyl cellulose, soluble starch or laminarin (PubMed:18579426).</text>
</comment>
<comment type="catalytic activity">
    <reaction evidence="3 4 6">
        <text>Random hydrolysis of (1-&gt;4)-beta-D-mannosidic linkages in mannans, galactomannans and glucomannans.</text>
        <dbReference type="EC" id="3.2.1.78"/>
    </reaction>
</comment>
<comment type="activity regulation">
    <text evidence="3">Activated particularly by Ca(2+) and Zn(2+), and to a lesser extent by Na(+), K(+), Mg(2+) and Cu(2+). Activation effect of the divalent metal ions Ca(2+), Zn(2+), Mg(2+) and Cu(2+) is reduced significantly by the addition of EDTA. Strongly inhibited by Mn(2+), Hg(2+) and Ag(+).</text>
</comment>
<comment type="biophysicochemical properties">
    <kinetics>
        <KM evidence="6">5.61 mg/ml for 0.5% locust bean gum (at pH 3.5 and 10 degrees Celsius in the presence of 50mM sodium citrate)</KM>
        <Vmax evidence="6">2477.22 mol/min/mg enzyme with 0.5% locust bean gum as substrate (at pH 3.5 and 10 degrees Celsius in the presence of 50mM sodium citrate)</Vmax>
        <text evidence="6">kcat is 1659.90 sec(-1) for 0.5% locust bean gum (at pH 3.5 and 10 degrees Celsius in the presence of 50mM sodium citrate).</text>
    </kinetics>
    <phDependence>
        <text evidence="3">Optimum pH is 3.5. Maintains more than 50% of the maximum activity at pH 2.5-6.0. Not active at a pH above 7.0.</text>
    </phDependence>
    <temperatureDependence>
        <text evidence="3">Optimum temperature is 30 degrees Celsius. Retains approximately 20-40% of its maximum activity even at 0-5 degrees Celsius. Drastic loss of activity at temperatures above 45 degrees Celsius, at which the half-life of the enzyme activity is less than 10 minutes.</text>
    </temperatureDependence>
</comment>
<comment type="subunit">
    <text evidence="5 6">Monomer.</text>
</comment>
<comment type="subcellular location">
    <subcellularLocation>
        <location evidence="11">Secreted</location>
    </subcellularLocation>
</comment>
<comment type="biotechnology">
    <text evidence="12">Potential use in mannan-hydrolysis industries which need especially low temperature and an acidic condition such as the food and the animal feed industries.</text>
</comment>
<comment type="similarity">
    <text evidence="11">Belongs to the glycosyl hydrolase 5 (cellulase A) family.</text>
</comment>
<reference evidence="14" key="1">
    <citation type="journal article" date="2008" name="Comp. Biochem. Physiol.">
        <title>Molecular cloning and characterization of a novel cold-active beta-1,4-D-mannanase from the Antarctic springtail, Cryptopygus antarcticus.</title>
        <authorList>
            <person name="Song J.M."/>
            <person name="Nam K.-W."/>
            <person name="Kang S.G."/>
            <person name="Kim C.-G."/>
            <person name="Kwon S.-T."/>
            <person name="Lee Y.-H."/>
        </authorList>
    </citation>
    <scope>NUCLEOTIDE SEQUENCE [MRNA]</scope>
    <scope>FUNCTION</scope>
    <scope>SUBSTRATE SPECIFICITY</scope>
    <scope>CATALYTIC ACTIVITY</scope>
    <scope>ACTIVITY REGULATION</scope>
    <scope>BIOPHYSICOCHEMICAL PROPERTIES</scope>
    <scope>BIOTECHNOLOGY</scope>
</reference>
<reference key="2">
    <citation type="journal article" date="2012" name="Protein Expr. Purif.">
        <title>Cultivation at 6-10 degrees C is an effective strategy to overcome the insolubility of recombinant proteins in Escherichia coli.</title>
        <authorList>
            <person name="Song J.M."/>
            <person name="An Y.J."/>
            <person name="Kang M.H."/>
            <person name="Lee Y.H."/>
            <person name="Cha S.S."/>
        </authorList>
    </citation>
    <scope>CATALYTIC ACTIVITY</scope>
</reference>
<reference key="3">
    <citation type="journal article" date="2013" name="Acta Crystallogr. F">
        <title>Expression at 279 K, purification, crystallization and preliminary X-ray crystallographic analysis of a novel cold-active beta-1,4-D-mannanase from the Antarctic springtail Cryptopygus antarcticus.</title>
        <authorList>
            <person name="Kim M.K."/>
            <person name="An Y.J."/>
            <person name="Jeong C.S."/>
            <person name="Song J.M."/>
            <person name="Kang M.H."/>
            <person name="Lee Y.H."/>
            <person name="Cha S.S."/>
        </authorList>
    </citation>
    <scope>CRYSTALLIZATION</scope>
    <scope>SUBUNIT</scope>
</reference>
<reference evidence="15 16" key="4">
    <citation type="journal article" date="2014" name="Proteins">
        <title>Structure-based investigation into the functional roles of the extended loop and substrate-recognition sites in an endo-beta-1,4-D-mannanase from the Antarctic springtail, Cryptopygus antarcticus.</title>
        <authorList>
            <person name="Kim M.K."/>
            <person name="An Y.J."/>
            <person name="Song J.M."/>
            <person name="Jeong C.S."/>
            <person name="Kang M.H."/>
            <person name="Kwon K.K."/>
            <person name="Lee Y.H."/>
            <person name="Cha S.S."/>
        </authorList>
    </citation>
    <scope>X-RAY CRYSTALLOGRAPHY (2.36 ANGSTROMS) AND IN COMPLEX WITH MANNOPENTAOSE</scope>
    <scope>FUNCTION</scope>
    <scope>CATALYTIC ACTIVITY</scope>
    <scope>BIOPHYSICOCHEMICAL PROPERTIES</scope>
    <scope>SUBUNIT</scope>
    <scope>DISULFIDE BONDS</scope>
    <scope>MUTAGENESIS OF TRP-243; HIS-284; TRP-341 AND 346-GLY--SER-350</scope>
</reference>
<name>MANA_CRYAT</name>
<feature type="signal peptide" evidence="2">
    <location>
        <begin position="1"/>
        <end position="19"/>
    </location>
</feature>
<feature type="chain" id="PRO_5002828363" description="Mannan endo-1,4-beta-mannosidase" evidence="2">
    <location>
        <begin position="20"/>
        <end position="382"/>
    </location>
</feature>
<feature type="region of interest" description="Involved in stabilization of the transition state" evidence="13">
    <location>
        <begin position="346"/>
        <end position="350"/>
    </location>
</feature>
<feature type="active site" description="Proton donor/acceptor" evidence="1">
    <location>
        <position position="181"/>
    </location>
</feature>
<feature type="active site" description="Nucleophile" evidence="1">
    <location>
        <position position="312"/>
    </location>
</feature>
<feature type="binding site" evidence="6 16">
    <location>
        <position position="83"/>
    </location>
    <ligand>
        <name>substrate</name>
    </ligand>
</feature>
<feature type="binding site" evidence="6 16">
    <location>
        <position position="144"/>
    </location>
    <ligand>
        <name>substrate</name>
    </ligand>
</feature>
<feature type="binding site" evidence="6 16">
    <location>
        <begin position="147"/>
        <end position="151"/>
    </location>
    <ligand>
        <name>substrate</name>
    </ligand>
</feature>
<feature type="binding site" evidence="6 16">
    <location>
        <position position="180"/>
    </location>
    <ligand>
        <name>substrate</name>
    </ligand>
</feature>
<feature type="binding site" evidence="6 16">
    <location>
        <position position="187"/>
    </location>
    <ligand>
        <name>substrate</name>
    </ligand>
</feature>
<feature type="binding site" evidence="6 16">
    <location>
        <position position="204"/>
    </location>
    <ligand>
        <name>substrate</name>
    </ligand>
</feature>
<feature type="binding site" evidence="6 16">
    <location>
        <position position="208"/>
    </location>
    <ligand>
        <name>substrate</name>
    </ligand>
</feature>
<feature type="binding site" evidence="6 16">
    <location>
        <position position="243"/>
    </location>
    <ligand>
        <name>substrate</name>
    </ligand>
</feature>
<feature type="binding site" evidence="6 16">
    <location>
        <position position="282"/>
    </location>
    <ligand>
        <name>substrate</name>
    </ligand>
</feature>
<feature type="binding site" evidence="6 16">
    <location>
        <position position="284"/>
    </location>
    <ligand>
        <name>substrate</name>
    </ligand>
</feature>
<feature type="binding site" evidence="6 16">
    <location>
        <position position="341"/>
    </location>
    <ligand>
        <name>substrate</name>
    </ligand>
</feature>
<feature type="binding site" evidence="6 16">
    <location>
        <position position="348"/>
    </location>
    <ligand>
        <name>substrate</name>
    </ligand>
</feature>
<feature type="disulfide bond" evidence="6 15 16">
    <location>
        <begin position="195"/>
        <end position="262"/>
    </location>
</feature>
<feature type="disulfide bond" evidence="6 15 16">
    <location>
        <begin position="317"/>
        <end position="349"/>
    </location>
</feature>
<feature type="mutagenesis site" description="2.5-fold reduction in substrate affinity and minor reduction in substrate turnover compared to the wild-type." evidence="6">
    <original>W</original>
    <variation>F</variation>
    <location>
        <position position="243"/>
    </location>
</feature>
<feature type="mutagenesis site" description="Slight reduction in substrate affinity and minor reduction in substrate turnover compared to the wild-type." evidence="6">
    <original>H</original>
    <variation>A</variation>
    <location>
        <position position="284"/>
    </location>
</feature>
<feature type="mutagenesis site" description="About 1.4-fold increase in substrate affinity, but 1.5-fold reduction in substrate turnover compared to the wild-type." evidence="6">
    <original>H</original>
    <variation>W</variation>
    <location>
        <position position="284"/>
    </location>
</feature>
<feature type="mutagenesis site" description="2-fold reduction in substrate affinity and 10-fold reduction in substrate turnover compared to the wild-type." evidence="6">
    <original>W</original>
    <variation>F</variation>
    <location>
        <position position="341"/>
    </location>
</feature>
<feature type="mutagenesis site" description="Optimum temperature is increased by 5 degrees Celsius compared to the wild-type. Exhibits approximately half of its Vmax at 0-30 degrees Celsius. No significant difference in substrate affinity, but nearly 2-fold reduction in substrate turnover compared to the wild-type. Requires 1.8 kcalmol(-1) higher activation enthalpy than the wild-type." evidence="6">
    <location>
        <begin position="346"/>
        <end position="350"/>
    </location>
</feature>
<feature type="strand" evidence="17">
    <location>
        <begin position="24"/>
        <end position="26"/>
    </location>
</feature>
<feature type="strand" evidence="17">
    <location>
        <begin position="29"/>
        <end position="32"/>
    </location>
</feature>
<feature type="strand" evidence="17">
    <location>
        <begin position="35"/>
        <end position="37"/>
    </location>
</feature>
<feature type="strand" evidence="17">
    <location>
        <begin position="39"/>
        <end position="43"/>
    </location>
</feature>
<feature type="strand" evidence="17">
    <location>
        <begin position="52"/>
        <end position="54"/>
    </location>
</feature>
<feature type="helix" evidence="17">
    <location>
        <begin position="58"/>
        <end position="74"/>
    </location>
</feature>
<feature type="strand" evidence="17">
    <location>
        <begin position="79"/>
        <end position="86"/>
    </location>
</feature>
<feature type="strand" evidence="17">
    <location>
        <begin position="89"/>
        <end position="94"/>
    </location>
</feature>
<feature type="strand" evidence="17">
    <location>
        <begin position="100"/>
        <end position="103"/>
    </location>
</feature>
<feature type="helix" evidence="17">
    <location>
        <begin position="109"/>
        <end position="122"/>
    </location>
</feature>
<feature type="strand" evidence="17">
    <location>
        <begin position="126"/>
        <end position="135"/>
    </location>
</feature>
<feature type="helix" evidence="17">
    <location>
        <begin position="140"/>
        <end position="145"/>
    </location>
</feature>
<feature type="helix" evidence="17">
    <location>
        <begin position="149"/>
        <end position="158"/>
    </location>
</feature>
<feature type="helix" evidence="17">
    <location>
        <begin position="160"/>
        <end position="167"/>
    </location>
</feature>
<feature type="strand" evidence="17">
    <location>
        <begin position="173"/>
        <end position="180"/>
    </location>
</feature>
<feature type="helix" evidence="17">
    <location>
        <begin position="182"/>
        <end position="184"/>
    </location>
</feature>
<feature type="turn" evidence="17">
    <location>
        <begin position="194"/>
        <end position="196"/>
    </location>
</feature>
<feature type="turn" evidence="17">
    <location>
        <begin position="199"/>
        <end position="209"/>
    </location>
</feature>
<feature type="helix" evidence="17">
    <location>
        <begin position="215"/>
        <end position="232"/>
    </location>
</feature>
<feature type="strand" evidence="17">
    <location>
        <begin position="238"/>
        <end position="244"/>
    </location>
</feature>
<feature type="helix" evidence="17">
    <location>
        <begin position="245"/>
        <end position="247"/>
    </location>
</feature>
<feature type="helix" evidence="17">
    <location>
        <begin position="251"/>
        <end position="253"/>
    </location>
</feature>
<feature type="helix" evidence="17">
    <location>
        <begin position="260"/>
        <end position="267"/>
    </location>
</feature>
<feature type="strand" evidence="17">
    <location>
        <begin position="275"/>
        <end position="281"/>
    </location>
</feature>
<feature type="helix" evidence="17">
    <location>
        <begin position="293"/>
        <end position="295"/>
    </location>
</feature>
<feature type="helix" evidence="17">
    <location>
        <begin position="299"/>
        <end position="301"/>
    </location>
</feature>
<feature type="strand" evidence="17">
    <location>
        <begin position="308"/>
        <end position="314"/>
    </location>
</feature>
<feature type="strand" evidence="17">
    <location>
        <begin position="317"/>
        <end position="320"/>
    </location>
</feature>
<feature type="helix" evidence="17">
    <location>
        <begin position="323"/>
        <end position="332"/>
    </location>
</feature>
<feature type="strand" evidence="17">
    <location>
        <begin position="336"/>
        <end position="341"/>
    </location>
</feature>
<feature type="strand" evidence="18">
    <location>
        <begin position="347"/>
        <end position="349"/>
    </location>
</feature>
<feature type="helix" evidence="17">
    <location>
        <begin position="353"/>
        <end position="361"/>
    </location>
</feature>
<feature type="turn" evidence="17">
    <location>
        <begin position="362"/>
        <end position="365"/>
    </location>
</feature>
<evidence type="ECO:0000250" key="1">
    <source>
        <dbReference type="UniProtKB" id="Q99036"/>
    </source>
</evidence>
<evidence type="ECO:0000255" key="2"/>
<evidence type="ECO:0000269" key="3">
    <source>
    </source>
</evidence>
<evidence type="ECO:0000269" key="4">
    <source>
    </source>
</evidence>
<evidence type="ECO:0000269" key="5">
    <source>
    </source>
</evidence>
<evidence type="ECO:0000269" key="6">
    <source>
    </source>
</evidence>
<evidence type="ECO:0000303" key="7">
    <source>
    </source>
</evidence>
<evidence type="ECO:0000303" key="8">
    <source>
    </source>
</evidence>
<evidence type="ECO:0000303" key="9">
    <source>
    </source>
</evidence>
<evidence type="ECO:0000303" key="10">
    <source>
    </source>
</evidence>
<evidence type="ECO:0000305" key="11"/>
<evidence type="ECO:0000305" key="12">
    <source>
    </source>
</evidence>
<evidence type="ECO:0000305" key="13">
    <source>
    </source>
</evidence>
<evidence type="ECO:0000312" key="14">
    <source>
        <dbReference type="EMBL" id="ABV68808.1"/>
    </source>
</evidence>
<evidence type="ECO:0007744" key="15">
    <source>
        <dbReference type="PDB" id="4OOU"/>
    </source>
</evidence>
<evidence type="ECO:0007744" key="16">
    <source>
        <dbReference type="PDB" id="4OOZ"/>
    </source>
</evidence>
<evidence type="ECO:0007829" key="17">
    <source>
        <dbReference type="PDB" id="4OOU"/>
    </source>
</evidence>
<evidence type="ECO:0007829" key="18">
    <source>
        <dbReference type="PDB" id="4OOZ"/>
    </source>
</evidence>
<organism evidence="14">
    <name type="scientific">Cryptopygus antarcticus</name>
    <name type="common">Antarctic springtail</name>
    <dbReference type="NCBI Taxonomy" id="187623"/>
    <lineage>
        <taxon>Eukaryota</taxon>
        <taxon>Metazoa</taxon>
        <taxon>Ecdysozoa</taxon>
        <taxon>Arthropoda</taxon>
        <taxon>Hexapoda</taxon>
        <taxon>Collembola</taxon>
        <taxon>Entomobryomorpha</taxon>
        <taxon>Isotomoidea</taxon>
        <taxon>Isotomidae</taxon>
        <taxon>Anurophorinae</taxon>
        <taxon>Cryptopygus</taxon>
        <taxon>Cryptopygus antarcticus complex</taxon>
    </lineage>
</organism>
<keyword id="KW-0002">3D-structure</keyword>
<keyword id="KW-0119">Carbohydrate metabolism</keyword>
<keyword id="KW-1015">Disulfide bond</keyword>
<keyword id="KW-0326">Glycosidase</keyword>
<keyword id="KW-0378">Hydrolase</keyword>
<keyword id="KW-0624">Polysaccharide degradation</keyword>
<keyword id="KW-0964">Secreted</keyword>
<keyword id="KW-0732">Signal</keyword>
<proteinExistence type="evidence at protein level"/>
<protein>
    <recommendedName>
        <fullName evidence="11">Mannan endo-1,4-beta-mannosidase</fullName>
        <ecNumber evidence="3 4 6 14">3.2.1.78</ecNumber>
    </recommendedName>
    <alternativeName>
        <fullName evidence="7">Beta-mannanase</fullName>
    </alternativeName>
    <alternativeName>
        <fullName evidence="7 8 9 10">CaMan</fullName>
    </alternativeName>
    <alternativeName>
        <fullName evidence="7 10">Endo-beta-1,4-D-mannanase</fullName>
    </alternativeName>
</protein>
<sequence>MVKLFSFLLLVWVASPAFSSEFLKASGSNFYYGGQKVFLSGVNFAWRSYGSDFGNGQYASNGPALKDWINKVKASGGNTARVWVHVEGQVSPAFDSHGFVTSTDSKKTLINDLSDLLDYANGQNVFLILVLFNGALQNNSNVQNLFWDESKLNSYINNALTPMVNALKSKPSLAAWEVLNEPEGTLQPGSDQNSCYDTSTLAAQGAGWGGKKFPMKQILKTINWISSAIHNADSKALVTVGSWSELTQTDSFGYRNHYKDSCLTGAGGKSNGIINFYQMHTYSHSGKWNQNAPFKVNRWAYNVNDKPLLIGEFASVCSQNEGIQNLYKYAYNNGYNGALTWQFNSGGDCSDTYSNQMYGMQALKGQNDQSGGKGGMVSVNIN</sequence>
<dbReference type="EC" id="3.2.1.78" evidence="3 4 6 14"/>
<dbReference type="EMBL" id="EU021047">
    <property type="protein sequence ID" value="ABV68808.1"/>
    <property type="molecule type" value="mRNA"/>
</dbReference>
<dbReference type="PDB" id="4OOU">
    <property type="method" value="X-ray"/>
    <property type="resolution" value="2.36 A"/>
    <property type="chains" value="A/B=1-382"/>
</dbReference>
<dbReference type="PDB" id="4OOZ">
    <property type="method" value="X-ray"/>
    <property type="resolution" value="2.60 A"/>
    <property type="chains" value="A/B=1-382"/>
</dbReference>
<dbReference type="PDBsum" id="4OOU"/>
<dbReference type="PDBsum" id="4OOZ"/>
<dbReference type="SMR" id="B4XC07"/>
<dbReference type="CAZy" id="GH5">
    <property type="family name" value="Glycoside Hydrolase Family 5"/>
</dbReference>
<dbReference type="BRENDA" id="3.2.1.78">
    <property type="organism ID" value="11159"/>
</dbReference>
<dbReference type="EvolutionaryTrace" id="B4XC07"/>
<dbReference type="GO" id="GO:0005576">
    <property type="term" value="C:extracellular region"/>
    <property type="evidence" value="ECO:0000305"/>
    <property type="project" value="UniProtKB"/>
</dbReference>
<dbReference type="GO" id="GO:0016985">
    <property type="term" value="F:mannan endo-1,4-beta-mannosidase activity"/>
    <property type="evidence" value="ECO:0000314"/>
    <property type="project" value="UniProtKB"/>
</dbReference>
<dbReference type="GO" id="GO:0070492">
    <property type="term" value="F:oligosaccharide binding"/>
    <property type="evidence" value="ECO:0000314"/>
    <property type="project" value="UniProtKB"/>
</dbReference>
<dbReference type="GO" id="GO:0030247">
    <property type="term" value="F:polysaccharide binding"/>
    <property type="evidence" value="ECO:0000305"/>
    <property type="project" value="UniProtKB"/>
</dbReference>
<dbReference type="GO" id="GO:0046355">
    <property type="term" value="P:mannan catabolic process"/>
    <property type="evidence" value="ECO:0000314"/>
    <property type="project" value="UniProtKB"/>
</dbReference>
<dbReference type="Gene3D" id="3.20.20.80">
    <property type="entry name" value="Glycosidases"/>
    <property type="match status" value="1"/>
</dbReference>
<dbReference type="InterPro" id="IPR017853">
    <property type="entry name" value="Glycoside_hydrolase_SF"/>
</dbReference>
<dbReference type="PANTHER" id="PTHR37398">
    <property type="entry name" value="ENDO-BETA-1,4-MANNANASE"/>
    <property type="match status" value="1"/>
</dbReference>
<dbReference type="PANTHER" id="PTHR37398:SF3">
    <property type="entry name" value="GLYCOSIDE HYDROLASE FAMILY 5 DOMAIN-CONTAINING PROTEIN"/>
    <property type="match status" value="1"/>
</dbReference>
<dbReference type="SUPFAM" id="SSF51445">
    <property type="entry name" value="(Trans)glycosidases"/>
    <property type="match status" value="1"/>
</dbReference>